<feature type="chain" id="PRO_0000099215" description="Putative fusion protein">
    <location>
        <begin position="1"/>
        <end position="148"/>
    </location>
</feature>
<feature type="region of interest" description="Disordered" evidence="3">
    <location>
        <begin position="1"/>
        <end position="34"/>
    </location>
</feature>
<feature type="compositionally biased region" description="Basic and acidic residues" evidence="3">
    <location>
        <begin position="16"/>
        <end position="34"/>
    </location>
</feature>
<sequence length="148" mass="17388">MDRALSTFPGDDDETNERNINHREKTSGEHGHYEDKLLDLSEEEPNMIKIKNDIKKIINERYSNYISIDDDEISDILKDSFISNEEMQIKDFVLRLLVLEKLFQTSVKECNSLKNIIKRLENHIETIRKNMIVLTKKVDFQTGRSTTL</sequence>
<dbReference type="EMBL" id="M30039">
    <property type="protein sequence ID" value="AAC32898.1"/>
    <property type="molecule type" value="Genomic_DNA"/>
</dbReference>
<dbReference type="PIR" id="B33325">
    <property type="entry name" value="WMVZM2"/>
</dbReference>
<dbReference type="SMR" id="P16717"/>
<dbReference type="IntAct" id="P16717">
    <property type="interactions" value="2"/>
</dbReference>
<dbReference type="MINT" id="P16717"/>
<dbReference type="GO" id="GO:0016020">
    <property type="term" value="C:membrane"/>
    <property type="evidence" value="ECO:0007669"/>
    <property type="project" value="UniProtKB-KW"/>
</dbReference>
<dbReference type="GO" id="GO:0019031">
    <property type="term" value="C:viral envelope"/>
    <property type="evidence" value="ECO:0007669"/>
    <property type="project" value="InterPro"/>
</dbReference>
<dbReference type="GO" id="GO:0055036">
    <property type="term" value="C:virion membrane"/>
    <property type="evidence" value="ECO:0007669"/>
    <property type="project" value="UniProtKB-SubCell"/>
</dbReference>
<dbReference type="GO" id="GO:0019064">
    <property type="term" value="P:fusion of virus membrane with host plasma membrane"/>
    <property type="evidence" value="ECO:0007669"/>
    <property type="project" value="InterPro"/>
</dbReference>
<dbReference type="InterPro" id="IPR003436">
    <property type="entry name" value="Chordopox_Fusion/A27"/>
</dbReference>
<dbReference type="Pfam" id="PF02346">
    <property type="entry name" value="Vac_Fusion"/>
    <property type="match status" value="1"/>
</dbReference>
<dbReference type="PRINTS" id="PR01847">
    <property type="entry name" value="VIRALFUSION"/>
</dbReference>
<accession>P16717</accession>
<comment type="subunit">
    <text evidence="1">Homotrimer, covalently linked.</text>
</comment>
<comment type="subcellular location">
    <subcellularLocation>
        <location evidence="2">Virion membrane</location>
    </subcellularLocation>
</comment>
<comment type="similarity">
    <text evidence="4">Belongs to the poxviruses fusion protein family.</text>
</comment>
<organism>
    <name type="scientific">Sheeppox virus (strain KS-1)</name>
    <name type="common">SPPV</name>
    <name type="synonym">Capripoxvirus (strain KS-1)</name>
    <dbReference type="NCBI Taxonomy" id="10269"/>
    <lineage>
        <taxon>Viruses</taxon>
        <taxon>Varidnaviria</taxon>
        <taxon>Bamfordvirae</taxon>
        <taxon>Nucleocytoviricota</taxon>
        <taxon>Pokkesviricetes</taxon>
        <taxon>Chitovirales</taxon>
        <taxon>Poxviridae</taxon>
        <taxon>Chordopoxvirinae</taxon>
        <taxon>Capripoxvirus</taxon>
        <taxon>Sheeppox virus</taxon>
    </lineage>
</organism>
<keyword id="KW-0472">Membrane</keyword>
<keyword id="KW-0946">Virion</keyword>
<proteinExistence type="inferred from homology"/>
<organismHost>
    <name type="scientific">Ovis aries</name>
    <name type="common">Sheep</name>
    <dbReference type="NCBI Taxonomy" id="9940"/>
</organismHost>
<name>VFUS_SHEVK</name>
<gene>
    <name type="ORF">HM2</name>
</gene>
<evidence type="ECO:0000250" key="1"/>
<evidence type="ECO:0000250" key="2">
    <source>
        <dbReference type="UniProtKB" id="P26312"/>
    </source>
</evidence>
<evidence type="ECO:0000256" key="3">
    <source>
        <dbReference type="SAM" id="MobiDB-lite"/>
    </source>
</evidence>
<evidence type="ECO:0000305" key="4"/>
<reference key="1">
    <citation type="journal article" date="1989" name="J. Virol.">
        <title>A comparison of the genome organization of capripoxvirus with that of the orthopoxviruses.</title>
        <authorList>
            <person name="Gershon P.D."/>
            <person name="Ansell D.M."/>
            <person name="Black D.N."/>
        </authorList>
    </citation>
    <scope>NUCLEOTIDE SEQUENCE [GENOMIC DNA]</scope>
</reference>
<protein>
    <recommendedName>
        <fullName>Putative fusion protein</fullName>
    </recommendedName>
    <alternativeName>
        <fullName>Protein HM2</fullName>
    </alternativeName>
</protein>